<evidence type="ECO:0000255" key="1">
    <source>
        <dbReference type="HAMAP-Rule" id="MF_00473"/>
    </source>
</evidence>
<protein>
    <recommendedName>
        <fullName evidence="1">Glucose-6-phosphate isomerase</fullName>
        <shortName evidence="1">GPI</shortName>
        <ecNumber evidence="1">5.3.1.9</ecNumber>
    </recommendedName>
    <alternativeName>
        <fullName evidence="1">Phosphoglucose isomerase</fullName>
        <shortName evidence="1">PGI</shortName>
    </alternativeName>
    <alternativeName>
        <fullName evidence="1">Phosphohexose isomerase</fullName>
        <shortName evidence="1">PHI</shortName>
    </alternativeName>
</protein>
<name>G6PI_YERE8</name>
<gene>
    <name evidence="1" type="primary">pgi</name>
    <name type="ordered locus">YE3870</name>
</gene>
<comment type="function">
    <text evidence="1">Catalyzes the reversible isomerization of glucose-6-phosphate to fructose-6-phosphate.</text>
</comment>
<comment type="catalytic activity">
    <reaction evidence="1">
        <text>alpha-D-glucose 6-phosphate = beta-D-fructose 6-phosphate</text>
        <dbReference type="Rhea" id="RHEA:11816"/>
        <dbReference type="ChEBI" id="CHEBI:57634"/>
        <dbReference type="ChEBI" id="CHEBI:58225"/>
        <dbReference type="EC" id="5.3.1.9"/>
    </reaction>
</comment>
<comment type="pathway">
    <text evidence="1">Carbohydrate biosynthesis; gluconeogenesis.</text>
</comment>
<comment type="pathway">
    <text evidence="1">Carbohydrate degradation; glycolysis; D-glyceraldehyde 3-phosphate and glycerone phosphate from D-glucose: step 2/4.</text>
</comment>
<comment type="subcellular location">
    <subcellularLocation>
        <location evidence="1">Cytoplasm</location>
    </subcellularLocation>
</comment>
<comment type="similarity">
    <text evidence="1">Belongs to the GPI family.</text>
</comment>
<dbReference type="EC" id="5.3.1.9" evidence="1"/>
<dbReference type="EMBL" id="AM286415">
    <property type="protein sequence ID" value="CAL13891.1"/>
    <property type="molecule type" value="Genomic_DNA"/>
</dbReference>
<dbReference type="RefSeq" id="WP_011817308.1">
    <property type="nucleotide sequence ID" value="NC_008800.1"/>
</dbReference>
<dbReference type="RefSeq" id="YP_001008017.1">
    <property type="nucleotide sequence ID" value="NC_008800.1"/>
</dbReference>
<dbReference type="SMR" id="A1JRV9"/>
<dbReference type="KEGG" id="yen:YE3870"/>
<dbReference type="PATRIC" id="fig|393305.7.peg.4120"/>
<dbReference type="eggNOG" id="COG0166">
    <property type="taxonomic scope" value="Bacteria"/>
</dbReference>
<dbReference type="HOGENOM" id="CLU_017947_3_1_6"/>
<dbReference type="OrthoDB" id="140919at2"/>
<dbReference type="UniPathway" id="UPA00109">
    <property type="reaction ID" value="UER00181"/>
</dbReference>
<dbReference type="UniPathway" id="UPA00138"/>
<dbReference type="Proteomes" id="UP000000642">
    <property type="component" value="Chromosome"/>
</dbReference>
<dbReference type="GO" id="GO:0005829">
    <property type="term" value="C:cytosol"/>
    <property type="evidence" value="ECO:0007669"/>
    <property type="project" value="TreeGrafter"/>
</dbReference>
<dbReference type="GO" id="GO:0097367">
    <property type="term" value="F:carbohydrate derivative binding"/>
    <property type="evidence" value="ECO:0007669"/>
    <property type="project" value="InterPro"/>
</dbReference>
<dbReference type="GO" id="GO:0004347">
    <property type="term" value="F:glucose-6-phosphate isomerase activity"/>
    <property type="evidence" value="ECO:0007669"/>
    <property type="project" value="UniProtKB-UniRule"/>
</dbReference>
<dbReference type="GO" id="GO:0048029">
    <property type="term" value="F:monosaccharide binding"/>
    <property type="evidence" value="ECO:0007669"/>
    <property type="project" value="TreeGrafter"/>
</dbReference>
<dbReference type="GO" id="GO:0006094">
    <property type="term" value="P:gluconeogenesis"/>
    <property type="evidence" value="ECO:0007669"/>
    <property type="project" value="UniProtKB-UniRule"/>
</dbReference>
<dbReference type="GO" id="GO:0051156">
    <property type="term" value="P:glucose 6-phosphate metabolic process"/>
    <property type="evidence" value="ECO:0007669"/>
    <property type="project" value="TreeGrafter"/>
</dbReference>
<dbReference type="GO" id="GO:0006096">
    <property type="term" value="P:glycolytic process"/>
    <property type="evidence" value="ECO:0007669"/>
    <property type="project" value="UniProtKB-UniRule"/>
</dbReference>
<dbReference type="CDD" id="cd05015">
    <property type="entry name" value="SIS_PGI_1"/>
    <property type="match status" value="1"/>
</dbReference>
<dbReference type="CDD" id="cd05016">
    <property type="entry name" value="SIS_PGI_2"/>
    <property type="match status" value="1"/>
</dbReference>
<dbReference type="FunFam" id="1.10.1390.10:FF:000001">
    <property type="entry name" value="Glucose-6-phosphate isomerase"/>
    <property type="match status" value="1"/>
</dbReference>
<dbReference type="FunFam" id="3.40.50.10490:FF:000004">
    <property type="entry name" value="Glucose-6-phosphate isomerase"/>
    <property type="match status" value="1"/>
</dbReference>
<dbReference type="Gene3D" id="1.10.1390.10">
    <property type="match status" value="1"/>
</dbReference>
<dbReference type="Gene3D" id="3.40.50.10490">
    <property type="entry name" value="Glucose-6-phosphate isomerase like protein, domain 1"/>
    <property type="match status" value="2"/>
</dbReference>
<dbReference type="HAMAP" id="MF_00473">
    <property type="entry name" value="G6P_isomerase"/>
    <property type="match status" value="1"/>
</dbReference>
<dbReference type="InterPro" id="IPR001672">
    <property type="entry name" value="G6P_Isomerase"/>
</dbReference>
<dbReference type="InterPro" id="IPR023096">
    <property type="entry name" value="G6P_Isomerase_C"/>
</dbReference>
<dbReference type="InterPro" id="IPR018189">
    <property type="entry name" value="Phosphoglucose_isomerase_CS"/>
</dbReference>
<dbReference type="InterPro" id="IPR046348">
    <property type="entry name" value="SIS_dom_sf"/>
</dbReference>
<dbReference type="InterPro" id="IPR035476">
    <property type="entry name" value="SIS_PGI_1"/>
</dbReference>
<dbReference type="InterPro" id="IPR035482">
    <property type="entry name" value="SIS_PGI_2"/>
</dbReference>
<dbReference type="NCBIfam" id="NF001211">
    <property type="entry name" value="PRK00179.1"/>
    <property type="match status" value="1"/>
</dbReference>
<dbReference type="PANTHER" id="PTHR11469">
    <property type="entry name" value="GLUCOSE-6-PHOSPHATE ISOMERASE"/>
    <property type="match status" value="1"/>
</dbReference>
<dbReference type="PANTHER" id="PTHR11469:SF1">
    <property type="entry name" value="GLUCOSE-6-PHOSPHATE ISOMERASE"/>
    <property type="match status" value="1"/>
</dbReference>
<dbReference type="Pfam" id="PF00342">
    <property type="entry name" value="PGI"/>
    <property type="match status" value="1"/>
</dbReference>
<dbReference type="PRINTS" id="PR00662">
    <property type="entry name" value="G6PISOMERASE"/>
</dbReference>
<dbReference type="SUPFAM" id="SSF53697">
    <property type="entry name" value="SIS domain"/>
    <property type="match status" value="1"/>
</dbReference>
<dbReference type="PROSITE" id="PS00765">
    <property type="entry name" value="P_GLUCOSE_ISOMERASE_1"/>
    <property type="match status" value="1"/>
</dbReference>
<dbReference type="PROSITE" id="PS00174">
    <property type="entry name" value="P_GLUCOSE_ISOMERASE_2"/>
    <property type="match status" value="1"/>
</dbReference>
<dbReference type="PROSITE" id="PS51463">
    <property type="entry name" value="P_GLUCOSE_ISOMERASE_3"/>
    <property type="match status" value="1"/>
</dbReference>
<reference key="1">
    <citation type="journal article" date="2006" name="PLoS Genet.">
        <title>The complete genome sequence and comparative genome analysis of the high pathogenicity Yersinia enterocolitica strain 8081.</title>
        <authorList>
            <person name="Thomson N.R."/>
            <person name="Howard S."/>
            <person name="Wren B.W."/>
            <person name="Holden M.T.G."/>
            <person name="Crossman L."/>
            <person name="Challis G.L."/>
            <person name="Churcher C."/>
            <person name="Mungall K."/>
            <person name="Brooks K."/>
            <person name="Chillingworth T."/>
            <person name="Feltwell T."/>
            <person name="Abdellah Z."/>
            <person name="Hauser H."/>
            <person name="Jagels K."/>
            <person name="Maddison M."/>
            <person name="Moule S."/>
            <person name="Sanders M."/>
            <person name="Whitehead S."/>
            <person name="Quail M.A."/>
            <person name="Dougan G."/>
            <person name="Parkhill J."/>
            <person name="Prentice M.B."/>
        </authorList>
    </citation>
    <scope>NUCLEOTIDE SEQUENCE [LARGE SCALE GENOMIC DNA]</scope>
    <source>
        <strain>NCTC 13174 / 8081</strain>
    </source>
</reference>
<sequence length="548" mass="61121">MKNINPSQTAAWKALQQHFEQMKDVTISSLFAKDDQRFNQFSATFDDQMLVDFSKNRITRETMEKLQALAKETDLAGAIKAMFSGEKINRTEDRAVLHIALRNRSNTPIVVDGKDVMPEVNAVLAKMKQFCDRVIGGEWKGYTGKAITDVVNIGIGGSDLGPYMVTEALRPYKNHLNMHFVSNVDGTHIAETLKPLNPETTLFLVASKTFTTQETMTNAHSARDWFLSTASDEKHVAKHFAALSTNAKAVGEFGIDTNNMFEFWDWVGGRYSLWSAIGLSIALSVGFENFEQLLSGAHAMDKHFAETPAEKNLPILLALIGIWYNNFFGAETEAILPYDQYMHRFPAYFQQGNMESNGKYVGRDGKPVDYQTGPIIWGEPGTNGQHAFYQLIHQGTKLVPCDFIAPAISHNPLSDHHAKLLSNFFAQTEALAFGKSLAEVEAEFAATGKTPEQVAHVAPFKVFEGNRPTNSILLREITPFSLGALIALYEHKIFTQGVILNIYSFDQWGVELGKQLANRILPELAGDEKVTSHDSSTNALINRFKSWR</sequence>
<accession>A1JRV9</accession>
<keyword id="KW-0963">Cytoplasm</keyword>
<keyword id="KW-0312">Gluconeogenesis</keyword>
<keyword id="KW-0324">Glycolysis</keyword>
<keyword id="KW-0413">Isomerase</keyword>
<organism>
    <name type="scientific">Yersinia enterocolitica serotype O:8 / biotype 1B (strain NCTC 13174 / 8081)</name>
    <dbReference type="NCBI Taxonomy" id="393305"/>
    <lineage>
        <taxon>Bacteria</taxon>
        <taxon>Pseudomonadati</taxon>
        <taxon>Pseudomonadota</taxon>
        <taxon>Gammaproteobacteria</taxon>
        <taxon>Enterobacterales</taxon>
        <taxon>Yersiniaceae</taxon>
        <taxon>Yersinia</taxon>
    </lineage>
</organism>
<feature type="chain" id="PRO_1000014031" description="Glucose-6-phosphate isomerase">
    <location>
        <begin position="1"/>
        <end position="548"/>
    </location>
</feature>
<feature type="active site" description="Proton donor" evidence="1">
    <location>
        <position position="355"/>
    </location>
</feature>
<feature type="active site" evidence="1">
    <location>
        <position position="386"/>
    </location>
</feature>
<feature type="active site" evidence="1">
    <location>
        <position position="514"/>
    </location>
</feature>
<proteinExistence type="inferred from homology"/>